<sequence length="198" mass="22452">MHVALYGGSFDPPHNGHLALCLFAVELLRIDRLIISVSINPFKGRYGAADEQRKQMASLFAGELSRVGISAEVSGWELEKKQPSYTVDLIRYVRSVYPLDRLTLLIGEDSFREIRSWKSWEILPSLCDLAVFRRTSPEDHRENSSFPFSSGTVRLIDFDFPLSSTVIRERVAADMPVGDLLPSAIRHYIVKHGLYRKA</sequence>
<proteinExistence type="inferred from homology"/>
<comment type="function">
    <text evidence="1">Catalyzes the reversible adenylation of nicotinate mononucleotide (NaMN) to nicotinic acid adenine dinucleotide (NaAD).</text>
</comment>
<comment type="catalytic activity">
    <reaction evidence="1">
        <text>nicotinate beta-D-ribonucleotide + ATP + H(+) = deamido-NAD(+) + diphosphate</text>
        <dbReference type="Rhea" id="RHEA:22860"/>
        <dbReference type="ChEBI" id="CHEBI:15378"/>
        <dbReference type="ChEBI" id="CHEBI:30616"/>
        <dbReference type="ChEBI" id="CHEBI:33019"/>
        <dbReference type="ChEBI" id="CHEBI:57502"/>
        <dbReference type="ChEBI" id="CHEBI:58437"/>
        <dbReference type="EC" id="2.7.7.18"/>
    </reaction>
</comment>
<comment type="pathway">
    <text evidence="1">Cofactor biosynthesis; NAD(+) biosynthesis; deamido-NAD(+) from nicotinate D-ribonucleotide: step 1/1.</text>
</comment>
<comment type="similarity">
    <text evidence="1">Belongs to the NadD family.</text>
</comment>
<protein>
    <recommendedName>
        <fullName evidence="1">Probable nicotinate-nucleotide adenylyltransferase</fullName>
        <ecNumber evidence="1">2.7.7.18</ecNumber>
    </recommendedName>
    <alternativeName>
        <fullName evidence="1">Deamido-NAD(+) diphosphorylase</fullName>
    </alternativeName>
    <alternativeName>
        <fullName evidence="1">Deamido-NAD(+) pyrophosphorylase</fullName>
    </alternativeName>
    <alternativeName>
        <fullName evidence="1">Nicotinate mononucleotide adenylyltransferase</fullName>
        <shortName evidence="1">NaMN adenylyltransferase</shortName>
    </alternativeName>
</protein>
<reference key="1">
    <citation type="submission" date="2008-05" db="EMBL/GenBank/DDBJ databases">
        <title>Complete sequence of Chlorobium limicola DSM 245.</title>
        <authorList>
            <consortium name="US DOE Joint Genome Institute"/>
            <person name="Lucas S."/>
            <person name="Copeland A."/>
            <person name="Lapidus A."/>
            <person name="Glavina del Rio T."/>
            <person name="Dalin E."/>
            <person name="Tice H."/>
            <person name="Bruce D."/>
            <person name="Goodwin L."/>
            <person name="Pitluck S."/>
            <person name="Schmutz J."/>
            <person name="Larimer F."/>
            <person name="Land M."/>
            <person name="Hauser L."/>
            <person name="Kyrpides N."/>
            <person name="Ovchinnikova G."/>
            <person name="Zhao F."/>
            <person name="Li T."/>
            <person name="Liu Z."/>
            <person name="Overmann J."/>
            <person name="Bryant D.A."/>
            <person name="Richardson P."/>
        </authorList>
    </citation>
    <scope>NUCLEOTIDE SEQUENCE [LARGE SCALE GENOMIC DNA]</scope>
    <source>
        <strain>DSM 245 / NBRC 103803 / 6330</strain>
    </source>
</reference>
<evidence type="ECO:0000255" key="1">
    <source>
        <dbReference type="HAMAP-Rule" id="MF_00244"/>
    </source>
</evidence>
<feature type="chain" id="PRO_1000100766" description="Probable nicotinate-nucleotide adenylyltransferase">
    <location>
        <begin position="1"/>
        <end position="198"/>
    </location>
</feature>
<dbReference type="EC" id="2.7.7.18" evidence="1"/>
<dbReference type="EMBL" id="CP001097">
    <property type="protein sequence ID" value="ACD91504.1"/>
    <property type="molecule type" value="Genomic_DNA"/>
</dbReference>
<dbReference type="RefSeq" id="WP_012467368.1">
    <property type="nucleotide sequence ID" value="NC_010803.1"/>
</dbReference>
<dbReference type="SMR" id="B3EIJ2"/>
<dbReference type="STRING" id="290315.Clim_2485"/>
<dbReference type="KEGG" id="cli:Clim_2485"/>
<dbReference type="eggNOG" id="COG1057">
    <property type="taxonomic scope" value="Bacteria"/>
</dbReference>
<dbReference type="HOGENOM" id="CLU_069765_3_2_10"/>
<dbReference type="OrthoDB" id="5295945at2"/>
<dbReference type="UniPathway" id="UPA00253">
    <property type="reaction ID" value="UER00332"/>
</dbReference>
<dbReference type="Proteomes" id="UP000008841">
    <property type="component" value="Chromosome"/>
</dbReference>
<dbReference type="GO" id="GO:0005524">
    <property type="term" value="F:ATP binding"/>
    <property type="evidence" value="ECO:0007669"/>
    <property type="project" value="UniProtKB-KW"/>
</dbReference>
<dbReference type="GO" id="GO:0004515">
    <property type="term" value="F:nicotinate-nucleotide adenylyltransferase activity"/>
    <property type="evidence" value="ECO:0007669"/>
    <property type="project" value="UniProtKB-UniRule"/>
</dbReference>
<dbReference type="GO" id="GO:0009435">
    <property type="term" value="P:NAD biosynthetic process"/>
    <property type="evidence" value="ECO:0007669"/>
    <property type="project" value="UniProtKB-UniRule"/>
</dbReference>
<dbReference type="CDD" id="cd02165">
    <property type="entry name" value="NMNAT"/>
    <property type="match status" value="1"/>
</dbReference>
<dbReference type="Gene3D" id="3.40.50.620">
    <property type="entry name" value="HUPs"/>
    <property type="match status" value="1"/>
</dbReference>
<dbReference type="HAMAP" id="MF_00244">
    <property type="entry name" value="NaMN_adenylyltr"/>
    <property type="match status" value="1"/>
</dbReference>
<dbReference type="InterPro" id="IPR004821">
    <property type="entry name" value="Cyt_trans-like"/>
</dbReference>
<dbReference type="InterPro" id="IPR005248">
    <property type="entry name" value="NadD/NMNAT"/>
</dbReference>
<dbReference type="InterPro" id="IPR014729">
    <property type="entry name" value="Rossmann-like_a/b/a_fold"/>
</dbReference>
<dbReference type="NCBIfam" id="TIGR00125">
    <property type="entry name" value="cyt_tran_rel"/>
    <property type="match status" value="1"/>
</dbReference>
<dbReference type="NCBIfam" id="TIGR00482">
    <property type="entry name" value="nicotinate (nicotinamide) nucleotide adenylyltransferase"/>
    <property type="match status" value="1"/>
</dbReference>
<dbReference type="PANTHER" id="PTHR39321">
    <property type="entry name" value="NICOTINATE-NUCLEOTIDE ADENYLYLTRANSFERASE-RELATED"/>
    <property type="match status" value="1"/>
</dbReference>
<dbReference type="PANTHER" id="PTHR39321:SF3">
    <property type="entry name" value="PHOSPHOPANTETHEINE ADENYLYLTRANSFERASE"/>
    <property type="match status" value="1"/>
</dbReference>
<dbReference type="Pfam" id="PF01467">
    <property type="entry name" value="CTP_transf_like"/>
    <property type="match status" value="1"/>
</dbReference>
<dbReference type="SUPFAM" id="SSF52374">
    <property type="entry name" value="Nucleotidylyl transferase"/>
    <property type="match status" value="1"/>
</dbReference>
<organism>
    <name type="scientific">Chlorobium limicola (strain DSM 245 / NBRC 103803 / 6330)</name>
    <dbReference type="NCBI Taxonomy" id="290315"/>
    <lineage>
        <taxon>Bacteria</taxon>
        <taxon>Pseudomonadati</taxon>
        <taxon>Chlorobiota</taxon>
        <taxon>Chlorobiia</taxon>
        <taxon>Chlorobiales</taxon>
        <taxon>Chlorobiaceae</taxon>
        <taxon>Chlorobium/Pelodictyon group</taxon>
        <taxon>Chlorobium</taxon>
    </lineage>
</organism>
<accession>B3EIJ2</accession>
<name>NADD_CHLL2</name>
<keyword id="KW-0067">ATP-binding</keyword>
<keyword id="KW-0520">NAD</keyword>
<keyword id="KW-0547">Nucleotide-binding</keyword>
<keyword id="KW-0548">Nucleotidyltransferase</keyword>
<keyword id="KW-0662">Pyridine nucleotide biosynthesis</keyword>
<keyword id="KW-0808">Transferase</keyword>
<gene>
    <name evidence="1" type="primary">nadD</name>
    <name type="ordered locus">Clim_2485</name>
</gene>